<name>LURA1_RAT</name>
<dbReference type="EMBL" id="CH474008">
    <property type="protein sequence ID" value="EDL90291.1"/>
    <property type="molecule type" value="Genomic_DNA"/>
</dbReference>
<dbReference type="RefSeq" id="NP_001102733.1">
    <property type="nucleotide sequence ID" value="NM_001109263.1"/>
</dbReference>
<dbReference type="SMR" id="D4A8G3"/>
<dbReference type="FunCoup" id="D4A8G3">
    <property type="interactions" value="616"/>
</dbReference>
<dbReference type="IntAct" id="D4A8G3">
    <property type="interactions" value="3"/>
</dbReference>
<dbReference type="STRING" id="10116.ENSRNOP00000030673"/>
<dbReference type="iPTMnet" id="D4A8G3"/>
<dbReference type="PhosphoSitePlus" id="D4A8G3"/>
<dbReference type="PaxDb" id="10116-ENSRNOP00000030673"/>
<dbReference type="PeptideAtlas" id="D4A8G3"/>
<dbReference type="GeneID" id="500527"/>
<dbReference type="KEGG" id="rno:500527"/>
<dbReference type="UCSC" id="RGD:1566001">
    <property type="organism name" value="rat"/>
</dbReference>
<dbReference type="AGR" id="RGD:1566001"/>
<dbReference type="CTD" id="541468"/>
<dbReference type="RGD" id="1566001">
    <property type="gene designation" value="Lurap1"/>
</dbReference>
<dbReference type="eggNOG" id="ENOG502QQFH">
    <property type="taxonomic scope" value="Eukaryota"/>
</dbReference>
<dbReference type="HOGENOM" id="CLU_066656_1_0_1"/>
<dbReference type="InParanoid" id="D4A8G3"/>
<dbReference type="OrthoDB" id="65895at9989"/>
<dbReference type="PhylomeDB" id="D4A8G3"/>
<dbReference type="TreeFam" id="TF332089"/>
<dbReference type="PRO" id="PR:D4A8G3"/>
<dbReference type="Proteomes" id="UP000002494">
    <property type="component" value="Chromosome 5"/>
</dbReference>
<dbReference type="Proteomes" id="UP000234681">
    <property type="component" value="Chromosome 5"/>
</dbReference>
<dbReference type="Bgee" id="ENSRNOG00000023459">
    <property type="expression patterns" value="Expressed in cerebellum and 18 other cell types or tissues"/>
</dbReference>
<dbReference type="GO" id="GO:0042641">
    <property type="term" value="C:actomyosin"/>
    <property type="evidence" value="ECO:0000314"/>
    <property type="project" value="UniProtKB"/>
</dbReference>
<dbReference type="GO" id="GO:0005737">
    <property type="term" value="C:cytoplasm"/>
    <property type="evidence" value="ECO:0000266"/>
    <property type="project" value="RGD"/>
</dbReference>
<dbReference type="GO" id="GO:0031032">
    <property type="term" value="P:actomyosin structure organization"/>
    <property type="evidence" value="ECO:0000315"/>
    <property type="project" value="UniProtKB"/>
</dbReference>
<dbReference type="GO" id="GO:0016477">
    <property type="term" value="P:cell migration"/>
    <property type="evidence" value="ECO:0000315"/>
    <property type="project" value="UniProtKB"/>
</dbReference>
<dbReference type="GO" id="GO:0043123">
    <property type="term" value="P:positive regulation of canonical NF-kappaB signal transduction"/>
    <property type="evidence" value="ECO:0000266"/>
    <property type="project" value="RGD"/>
</dbReference>
<dbReference type="GO" id="GO:0001819">
    <property type="term" value="P:positive regulation of cytokine production"/>
    <property type="evidence" value="ECO:0000266"/>
    <property type="project" value="RGD"/>
</dbReference>
<dbReference type="InterPro" id="IPR039499">
    <property type="entry name" value="LURA1/LRA25"/>
</dbReference>
<dbReference type="InterPro" id="IPR037443">
    <property type="entry name" value="LURAP1"/>
</dbReference>
<dbReference type="PANTHER" id="PTHR33767:SF2">
    <property type="entry name" value="LEUCINE RICH ADAPTOR PROTEIN 1"/>
    <property type="match status" value="1"/>
</dbReference>
<dbReference type="PANTHER" id="PTHR33767">
    <property type="entry name" value="LEUCINE RICH ADAPTOR PROTEIN 1-LIKE"/>
    <property type="match status" value="1"/>
</dbReference>
<dbReference type="Pfam" id="PF14854">
    <property type="entry name" value="LURAP"/>
    <property type="match status" value="1"/>
</dbReference>
<protein>
    <recommendedName>
        <fullName>Leucine rich adaptor protein 1</fullName>
    </recommendedName>
    <alternativeName>
        <fullName>Leucine repeat adapter protein 35A</fullName>
    </alternativeName>
</protein>
<keyword id="KW-0963">Cytoplasm</keyword>
<keyword id="KW-0433">Leucine-rich repeat</keyword>
<keyword id="KW-0597">Phosphoprotein</keyword>
<keyword id="KW-1185">Reference proteome</keyword>
<keyword id="KW-0677">Repeat</keyword>
<evidence type="ECO:0000250" key="1"/>
<evidence type="ECO:0000250" key="2">
    <source>
        <dbReference type="UniProtKB" id="Q96LR2"/>
    </source>
</evidence>
<evidence type="ECO:0000250" key="3">
    <source>
        <dbReference type="UniProtKB" id="Q9D6I9"/>
    </source>
</evidence>
<evidence type="ECO:0000256" key="4">
    <source>
        <dbReference type="SAM" id="MobiDB-lite"/>
    </source>
</evidence>
<evidence type="ECO:0000269" key="5">
    <source>
    </source>
</evidence>
<evidence type="ECO:0000269" key="6">
    <source>
    </source>
</evidence>
<evidence type="ECO:0007744" key="7">
    <source>
    </source>
</evidence>
<organism>
    <name type="scientific">Rattus norvegicus</name>
    <name type="common">Rat</name>
    <dbReference type="NCBI Taxonomy" id="10116"/>
    <lineage>
        <taxon>Eukaryota</taxon>
        <taxon>Metazoa</taxon>
        <taxon>Chordata</taxon>
        <taxon>Craniata</taxon>
        <taxon>Vertebrata</taxon>
        <taxon>Euteleostomi</taxon>
        <taxon>Mammalia</taxon>
        <taxon>Eutheria</taxon>
        <taxon>Euarchontoglires</taxon>
        <taxon>Glires</taxon>
        <taxon>Rodentia</taxon>
        <taxon>Myomorpha</taxon>
        <taxon>Muroidea</taxon>
        <taxon>Muridae</taxon>
        <taxon>Murinae</taxon>
        <taxon>Rattus</taxon>
    </lineage>
</organism>
<reference key="1">
    <citation type="submission" date="2005-09" db="EMBL/GenBank/DDBJ databases">
        <authorList>
            <person name="Mural R.J."/>
            <person name="Adams M.D."/>
            <person name="Myers E.W."/>
            <person name="Smith H.O."/>
            <person name="Venter J.C."/>
        </authorList>
    </citation>
    <scope>NUCLEOTIDE SEQUENCE [LARGE SCALE GENOMIC DNA]</scope>
</reference>
<reference key="2">
    <citation type="journal article" date="2008" name="Cell">
        <title>A tripartite complex containing MRCK modulates lamellar actomyosin retrograde flow.</title>
        <authorList>
            <person name="Tan I."/>
            <person name="Yong J."/>
            <person name="Dong J.M."/>
            <person name="Lim L."/>
            <person name="Leung T."/>
        </authorList>
    </citation>
    <scope>IDENTIFICATION BY MASS SPECTROMETRY</scope>
    <scope>FUNCTION</scope>
    <scope>INTERACTION WITH CDC42BPA/CDC42BPB AND MYO18A</scope>
    <scope>PHOSPHORYLATION</scope>
</reference>
<reference key="3">
    <citation type="journal article" date="2012" name="Nat. Commun.">
        <title>Quantitative maps of protein phosphorylation sites across 14 different rat organs and tissues.</title>
        <authorList>
            <person name="Lundby A."/>
            <person name="Secher A."/>
            <person name="Lage K."/>
            <person name="Nordsborg N.B."/>
            <person name="Dmytriyev A."/>
            <person name="Lundby C."/>
            <person name="Olsen J.V."/>
        </authorList>
    </citation>
    <scope>PHOSPHORYLATION [LARGE SCALE ANALYSIS] AT SER-126 AND SER-129</scope>
    <scope>IDENTIFICATION BY MASS SPECTROMETRY [LARGE SCALE ANALYSIS]</scope>
</reference>
<reference key="4">
    <citation type="journal article" date="2014" name="J. Biol. Chem.">
        <title>Adaptor protein LRAP25 mediates myotonic dystrophy kinase-related Cdc42-binding kinase (MRCK) regulation of LIMK1 protein in lamellipodial F-actin dynamics.</title>
        <authorList>
            <person name="Lee I.C."/>
            <person name="Leung T."/>
            <person name="Tan I."/>
        </authorList>
    </citation>
    <scope>INTERACTION WITH CDC42BPA AND CDC42BPB</scope>
    <source>
        <tissue>Brain</tissue>
    </source>
</reference>
<sequence length="239" mass="25891">MEGTAESQTPDLRDVEGKVGRKTPEGLLRGLRGECDLGTSGDVLLPGASSTGHGLGDKIMALRMELAYLRAIDVKILQQLVTLNEGIEAVRWLLEERGTLTSHCSSLTSSQYSLTGGSPERSRRGSWDSLPDTSSTDRLDSVSIGSFLDTVAPRELDEQGHPGPSCPEIDWAKVIPSEDRARTEVDMTSTKLGSLTATWKLPGDGLQCGPPEPSEDDSAKQGFEAHWYWGQCQDDVTFL</sequence>
<feature type="chain" id="PRO_0000414028" description="Leucine rich adaptor protein 1">
    <location>
        <begin position="1"/>
        <end position="239"/>
    </location>
</feature>
<feature type="repeat" description="LRR 1" evidence="1">
    <location>
        <begin position="55"/>
        <end position="83"/>
    </location>
</feature>
<feature type="repeat" description="LRR 2" evidence="1">
    <location>
        <begin position="93"/>
        <end position="114"/>
    </location>
</feature>
<feature type="region of interest" description="Disordered" evidence="4">
    <location>
        <begin position="107"/>
        <end position="140"/>
    </location>
</feature>
<feature type="compositionally biased region" description="Low complexity" evidence="4">
    <location>
        <begin position="107"/>
        <end position="118"/>
    </location>
</feature>
<feature type="modified residue" description="Phosphoserine" evidence="3">
    <location>
        <position position="118"/>
    </location>
</feature>
<feature type="modified residue" description="Phosphoserine" evidence="7">
    <location>
        <position position="126"/>
    </location>
</feature>
<feature type="modified residue" description="Phosphoserine" evidence="7">
    <location>
        <position position="129"/>
    </location>
</feature>
<accession>D4A8G3</accession>
<proteinExistence type="evidence at protein level"/>
<comment type="function">
    <text evidence="1 5">Acts as an activator of the canonical NF-kappa-B pathway and drive the production of pro-inflammatory cytokines. Promotes the antigen (Ag)-presenting and priming function of dendritic cells via the canonical NF-kappa-B pathway (By similarity). In concert with MYO18A and CDC42BPA/CDC42BPB, is involved in modulating lamellar actomyosin retrograde flow that is crucial to cell protrusion and migration. Activates CDC42BPA/CDC42BPB and targets it to actomyosin through its interaction with MYO18A, leading to MYL9/MLC2 phosphorylation and MYH9/MYH10-dependent actomyosin assembly in the lamella.</text>
</comment>
<comment type="subunit">
    <text evidence="5 6">Forms a tripartite complex with CDC42BPA/CDC42BPB and MYO18A acting as an adapter connecting both. Its binding to CDC42BPA/CDC42BPB results in their activation by abolition of their negative autoregulation (PubMed:18854160). Interacts with CDC42BPA and CDC42BPB (PubMed:25107909).</text>
</comment>
<comment type="interaction">
    <interactant intactId="EBI-2015467">
        <id>D4A8G3</id>
    </interactant>
    <interactant intactId="EBI-689253">
        <id>O54874</id>
        <label>Cdc42bpa</label>
    </interactant>
    <organismsDiffer>false</organismsDiffer>
    <experiments>8</experiments>
</comment>
<comment type="interaction">
    <interactant intactId="EBI-2015467">
        <id>D4A8G3</id>
    </interactant>
    <interactant intactId="EBI-692673">
        <id>Q7TT49</id>
        <label>Cdc42bpb</label>
    </interactant>
    <organismsDiffer>false</organismsDiffer>
    <experiments>4</experiments>
</comment>
<comment type="subcellular location">
    <subcellularLocation>
        <location evidence="2">Cytoplasm</location>
    </subcellularLocation>
</comment>
<comment type="PTM">
    <text evidence="5">Phosphorylated.</text>
</comment>
<gene>
    <name type="primary">Lurap1</name>
    <name type="synonym">Lrap35a</name>
    <name type="synonym">Lrp35a</name>
</gene>